<name>SYN1L_DANRE</name>
<accession>Q5TZE2</accession>
<organism>
    <name type="scientific">Danio rerio</name>
    <name type="common">Zebrafish</name>
    <name type="synonym">Brachydanio rerio</name>
    <dbReference type="NCBI Taxonomy" id="7955"/>
    <lineage>
        <taxon>Eukaryota</taxon>
        <taxon>Metazoa</taxon>
        <taxon>Chordata</taxon>
        <taxon>Craniata</taxon>
        <taxon>Vertebrata</taxon>
        <taxon>Euteleostomi</taxon>
        <taxon>Actinopterygii</taxon>
        <taxon>Neopterygii</taxon>
        <taxon>Teleostei</taxon>
        <taxon>Ostariophysi</taxon>
        <taxon>Cypriniformes</taxon>
        <taxon>Danionidae</taxon>
        <taxon>Danioninae</taxon>
        <taxon>Danio</taxon>
    </lineage>
</organism>
<sequence>MESLSELQNPLLDKNSKHMVMADYGYGGDFHSNQYQENIINYFVTGGGGGGGGGGGGGGVAVTGGNGKAKSQLLDATSLHLAVEAFYKPNFILYKDDVSGKGKDYKNECCETTFMEKKDKEVVVETPSTEDPQAKLLDENDVKIQTVSYEVEEEEYVEYETDCSSDSESEDNFIVIPPRDHLGLAIFSMLCCFWPLGIAAFYFSQGTSKAVTKGDFPLASIASRRALFLAALSITIGTGVYVGVVVALIAYLSKPGHI</sequence>
<dbReference type="EMBL" id="BX255897">
    <property type="protein sequence ID" value="CAH69067.1"/>
    <property type="molecule type" value="Genomic_DNA"/>
</dbReference>
<dbReference type="EMBL" id="AL928790">
    <property type="protein sequence ID" value="CAQ15259.1"/>
    <property type="molecule type" value="Genomic_DNA"/>
</dbReference>
<dbReference type="RefSeq" id="NP_001038246.1">
    <property type="nucleotide sequence ID" value="NM_001044781.1"/>
</dbReference>
<dbReference type="RefSeq" id="XP_005160632.1">
    <property type="nucleotide sequence ID" value="XM_005160575.5"/>
</dbReference>
<dbReference type="SMR" id="Q5TZE2"/>
<dbReference type="FunCoup" id="Q5TZE2">
    <property type="interactions" value="213"/>
</dbReference>
<dbReference type="STRING" id="7955.ENSDARP00000127179"/>
<dbReference type="PaxDb" id="7955-ENSDARP00000127179"/>
<dbReference type="Ensembl" id="ENSDART00000153311">
    <property type="protein sequence ID" value="ENSDARP00000127179"/>
    <property type="gene ID" value="ENSDARG00000042390"/>
</dbReference>
<dbReference type="Ensembl" id="ENSDART00000190637">
    <property type="protein sequence ID" value="ENSDARP00000144868"/>
    <property type="gene ID" value="ENSDARG00000113400"/>
</dbReference>
<dbReference type="Ensembl" id="ENSDART00000192934">
    <property type="protein sequence ID" value="ENSDARP00000149071"/>
    <property type="gene ID" value="ENSDARG00000042390"/>
</dbReference>
<dbReference type="GeneID" id="555204"/>
<dbReference type="KEGG" id="dre:555204"/>
<dbReference type="AGR" id="ZFIN:ZDB-GENE-041001-116"/>
<dbReference type="CTD" id="646658"/>
<dbReference type="ZFIN" id="ZDB-GENE-041001-116">
    <property type="gene designation" value="syndig1l"/>
</dbReference>
<dbReference type="eggNOG" id="ENOG502QPQE">
    <property type="taxonomic scope" value="Eukaryota"/>
</dbReference>
<dbReference type="HOGENOM" id="CLU_094250_0_0_1"/>
<dbReference type="InParanoid" id="Q5TZE2"/>
<dbReference type="OMA" id="KMKSQQF"/>
<dbReference type="OrthoDB" id="9945519at2759"/>
<dbReference type="PhylomeDB" id="Q5TZE2"/>
<dbReference type="TreeFam" id="TF331357"/>
<dbReference type="PRO" id="PR:Q5TZE2"/>
<dbReference type="Proteomes" id="UP000000437">
    <property type="component" value="Alternate scaffold 20"/>
</dbReference>
<dbReference type="Proteomes" id="UP000000437">
    <property type="component" value="Chromosome 20"/>
</dbReference>
<dbReference type="Bgee" id="ENSDARG00000042390">
    <property type="expression patterns" value="Expressed in retina and 5 other cell types or tissues"/>
</dbReference>
<dbReference type="ExpressionAtlas" id="Q5TZE2">
    <property type="expression patterns" value="baseline"/>
</dbReference>
<dbReference type="GO" id="GO:0005794">
    <property type="term" value="C:Golgi apparatus"/>
    <property type="evidence" value="ECO:0007669"/>
    <property type="project" value="UniProtKB-SubCell"/>
</dbReference>
<dbReference type="GO" id="GO:0043231">
    <property type="term" value="C:intracellular membrane-bounded organelle"/>
    <property type="evidence" value="ECO:0000318"/>
    <property type="project" value="GO_Central"/>
</dbReference>
<dbReference type="GO" id="GO:0016020">
    <property type="term" value="C:membrane"/>
    <property type="evidence" value="ECO:0000318"/>
    <property type="project" value="GO_Central"/>
</dbReference>
<dbReference type="InterPro" id="IPR007593">
    <property type="entry name" value="CD225/Dispanin_fam"/>
</dbReference>
<dbReference type="PANTHER" id="PTHR14768:SF4">
    <property type="entry name" value="SYNAPSE DIFFERENTIATION-INDUCING GENE PROTEIN 1-LIKE"/>
    <property type="match status" value="1"/>
</dbReference>
<dbReference type="PANTHER" id="PTHR14768">
    <property type="entry name" value="UPF0338 PROTEIN"/>
    <property type="match status" value="1"/>
</dbReference>
<dbReference type="Pfam" id="PF04505">
    <property type="entry name" value="CD225"/>
    <property type="match status" value="1"/>
</dbReference>
<proteinExistence type="inferred from homology"/>
<reference key="1">
    <citation type="journal article" date="2013" name="Nature">
        <title>The zebrafish reference genome sequence and its relationship to the human genome.</title>
        <authorList>
            <person name="Howe K."/>
            <person name="Clark M.D."/>
            <person name="Torroja C.F."/>
            <person name="Torrance J."/>
            <person name="Berthelot C."/>
            <person name="Muffato M."/>
            <person name="Collins J.E."/>
            <person name="Humphray S."/>
            <person name="McLaren K."/>
            <person name="Matthews L."/>
            <person name="McLaren S."/>
            <person name="Sealy I."/>
            <person name="Caccamo M."/>
            <person name="Churcher C."/>
            <person name="Scott C."/>
            <person name="Barrett J.C."/>
            <person name="Koch R."/>
            <person name="Rauch G.J."/>
            <person name="White S."/>
            <person name="Chow W."/>
            <person name="Kilian B."/>
            <person name="Quintais L.T."/>
            <person name="Guerra-Assuncao J.A."/>
            <person name="Zhou Y."/>
            <person name="Gu Y."/>
            <person name="Yen J."/>
            <person name="Vogel J.H."/>
            <person name="Eyre T."/>
            <person name="Redmond S."/>
            <person name="Banerjee R."/>
            <person name="Chi J."/>
            <person name="Fu B."/>
            <person name="Langley E."/>
            <person name="Maguire S.F."/>
            <person name="Laird G.K."/>
            <person name="Lloyd D."/>
            <person name="Kenyon E."/>
            <person name="Donaldson S."/>
            <person name="Sehra H."/>
            <person name="Almeida-King J."/>
            <person name="Loveland J."/>
            <person name="Trevanion S."/>
            <person name="Jones M."/>
            <person name="Quail M."/>
            <person name="Willey D."/>
            <person name="Hunt A."/>
            <person name="Burton J."/>
            <person name="Sims S."/>
            <person name="McLay K."/>
            <person name="Plumb B."/>
            <person name="Davis J."/>
            <person name="Clee C."/>
            <person name="Oliver K."/>
            <person name="Clark R."/>
            <person name="Riddle C."/>
            <person name="Elliot D."/>
            <person name="Threadgold G."/>
            <person name="Harden G."/>
            <person name="Ware D."/>
            <person name="Begum S."/>
            <person name="Mortimore B."/>
            <person name="Kerry G."/>
            <person name="Heath P."/>
            <person name="Phillimore B."/>
            <person name="Tracey A."/>
            <person name="Corby N."/>
            <person name="Dunn M."/>
            <person name="Johnson C."/>
            <person name="Wood J."/>
            <person name="Clark S."/>
            <person name="Pelan S."/>
            <person name="Griffiths G."/>
            <person name="Smith M."/>
            <person name="Glithero R."/>
            <person name="Howden P."/>
            <person name="Barker N."/>
            <person name="Lloyd C."/>
            <person name="Stevens C."/>
            <person name="Harley J."/>
            <person name="Holt K."/>
            <person name="Panagiotidis G."/>
            <person name="Lovell J."/>
            <person name="Beasley H."/>
            <person name="Henderson C."/>
            <person name="Gordon D."/>
            <person name="Auger K."/>
            <person name="Wright D."/>
            <person name="Collins J."/>
            <person name="Raisen C."/>
            <person name="Dyer L."/>
            <person name="Leung K."/>
            <person name="Robertson L."/>
            <person name="Ambridge K."/>
            <person name="Leongamornlert D."/>
            <person name="McGuire S."/>
            <person name="Gilderthorp R."/>
            <person name="Griffiths C."/>
            <person name="Manthravadi D."/>
            <person name="Nichol S."/>
            <person name="Barker G."/>
            <person name="Whitehead S."/>
            <person name="Kay M."/>
            <person name="Brown J."/>
            <person name="Murnane C."/>
            <person name="Gray E."/>
            <person name="Humphries M."/>
            <person name="Sycamore N."/>
            <person name="Barker D."/>
            <person name="Saunders D."/>
            <person name="Wallis J."/>
            <person name="Babbage A."/>
            <person name="Hammond S."/>
            <person name="Mashreghi-Mohammadi M."/>
            <person name="Barr L."/>
            <person name="Martin S."/>
            <person name="Wray P."/>
            <person name="Ellington A."/>
            <person name="Matthews N."/>
            <person name="Ellwood M."/>
            <person name="Woodmansey R."/>
            <person name="Clark G."/>
            <person name="Cooper J."/>
            <person name="Tromans A."/>
            <person name="Grafham D."/>
            <person name="Skuce C."/>
            <person name="Pandian R."/>
            <person name="Andrews R."/>
            <person name="Harrison E."/>
            <person name="Kimberley A."/>
            <person name="Garnett J."/>
            <person name="Fosker N."/>
            <person name="Hall R."/>
            <person name="Garner P."/>
            <person name="Kelly D."/>
            <person name="Bird C."/>
            <person name="Palmer S."/>
            <person name="Gehring I."/>
            <person name="Berger A."/>
            <person name="Dooley C.M."/>
            <person name="Ersan-Urun Z."/>
            <person name="Eser C."/>
            <person name="Geiger H."/>
            <person name="Geisler M."/>
            <person name="Karotki L."/>
            <person name="Kirn A."/>
            <person name="Konantz J."/>
            <person name="Konantz M."/>
            <person name="Oberlander M."/>
            <person name="Rudolph-Geiger S."/>
            <person name="Teucke M."/>
            <person name="Lanz C."/>
            <person name="Raddatz G."/>
            <person name="Osoegawa K."/>
            <person name="Zhu B."/>
            <person name="Rapp A."/>
            <person name="Widaa S."/>
            <person name="Langford C."/>
            <person name="Yang F."/>
            <person name="Schuster S.C."/>
            <person name="Carter N.P."/>
            <person name="Harrow J."/>
            <person name="Ning Z."/>
            <person name="Herrero J."/>
            <person name="Searle S.M."/>
            <person name="Enright A."/>
            <person name="Geisler R."/>
            <person name="Plasterk R.H."/>
            <person name="Lee C."/>
            <person name="Westerfield M."/>
            <person name="de Jong P.J."/>
            <person name="Zon L.I."/>
            <person name="Postlethwait J.H."/>
            <person name="Nusslein-Volhard C."/>
            <person name="Hubbard T.J."/>
            <person name="Roest Crollius H."/>
            <person name="Rogers J."/>
            <person name="Stemple D.L."/>
        </authorList>
    </citation>
    <scope>NUCLEOTIDE SEQUENCE [LARGE SCALE GENOMIC DNA]</scope>
    <source>
        <strain>Tuebingen</strain>
    </source>
</reference>
<reference key="2">
    <citation type="journal article" date="2012" name="PLoS ONE">
        <title>The dispanins: a novel gene family of ancient origin that contains 14 human members.</title>
        <authorList>
            <person name="Sallman Almen M."/>
            <person name="Bringeland N."/>
            <person name="Fredriksson R."/>
            <person name="Schioth H.B."/>
        </authorList>
    </citation>
    <scope>GENE FAMILY</scope>
</reference>
<protein>
    <recommendedName>
        <fullName>Synapse differentiation-inducing gene protein 1-like</fullName>
    </recommendedName>
    <alternativeName>
        <fullName>Capucin</fullName>
    </alternativeName>
    <alternativeName>
        <fullName>Dispanin subfamily C member 1</fullName>
        <shortName>DSPC1</shortName>
    </alternativeName>
    <alternativeName>
        <fullName>Transmembrane protein 90A</fullName>
    </alternativeName>
</protein>
<evidence type="ECO:0000250" key="1"/>
<evidence type="ECO:0000255" key="2"/>
<evidence type="ECO:0000305" key="3"/>
<feature type="chain" id="PRO_0000332727" description="Synapse differentiation-inducing gene protein 1-like">
    <location>
        <begin position="1"/>
        <end position="258"/>
    </location>
</feature>
<feature type="topological domain" description="Extracellular" evidence="2">
    <location>
        <begin position="1"/>
        <end position="182"/>
    </location>
</feature>
<feature type="transmembrane region" description="Helical" evidence="2">
    <location>
        <begin position="183"/>
        <end position="203"/>
    </location>
</feature>
<feature type="topological domain" description="Cytoplasmic" evidence="2">
    <location>
        <begin position="204"/>
        <end position="228"/>
    </location>
</feature>
<feature type="transmembrane region" description="Helical" evidence="2">
    <location>
        <begin position="229"/>
        <end position="249"/>
    </location>
</feature>
<feature type="topological domain" description="Extracellular" evidence="2">
    <location>
        <begin position="250"/>
        <end position="258"/>
    </location>
</feature>
<comment type="subcellular location">
    <subcellularLocation>
        <location evidence="3">Membrane</location>
        <topology evidence="3">Multi-pass membrane protein</topology>
    </subcellularLocation>
    <subcellularLocation>
        <location evidence="1">Golgi apparatus</location>
        <location evidence="1">cis-Golgi network</location>
    </subcellularLocation>
</comment>
<comment type="similarity">
    <text evidence="3">Belongs to the CD225/Dispanin family.</text>
</comment>
<keyword id="KW-0333">Golgi apparatus</keyword>
<keyword id="KW-0472">Membrane</keyword>
<keyword id="KW-1185">Reference proteome</keyword>
<keyword id="KW-0812">Transmembrane</keyword>
<keyword id="KW-1133">Transmembrane helix</keyword>
<gene>
    <name type="primary">syndig1l</name>
    <name type="ORF">si:ch211-146n9.2</name>
    <name type="ORF">si:dkey-263b2.1</name>
</gene>